<dbReference type="EMBL" id="CP000255">
    <property type="protein sequence ID" value="ABD21001.1"/>
    <property type="molecule type" value="Genomic_DNA"/>
</dbReference>
<dbReference type="RefSeq" id="WP_000387527.1">
    <property type="nucleotide sequence ID" value="NZ_CP027476.1"/>
</dbReference>
<dbReference type="SMR" id="Q2FEP4"/>
<dbReference type="GeneID" id="98346557"/>
<dbReference type="KEGG" id="saa:SAUSA300_2199"/>
<dbReference type="HOGENOM" id="CLU_083987_3_3_9"/>
<dbReference type="Proteomes" id="UP000001939">
    <property type="component" value="Chromosome"/>
</dbReference>
<dbReference type="GO" id="GO:0022625">
    <property type="term" value="C:cytosolic large ribosomal subunit"/>
    <property type="evidence" value="ECO:0007669"/>
    <property type="project" value="TreeGrafter"/>
</dbReference>
<dbReference type="GO" id="GO:0019843">
    <property type="term" value="F:rRNA binding"/>
    <property type="evidence" value="ECO:0007669"/>
    <property type="project" value="UniProtKB-UniRule"/>
</dbReference>
<dbReference type="GO" id="GO:0003735">
    <property type="term" value="F:structural constituent of ribosome"/>
    <property type="evidence" value="ECO:0007669"/>
    <property type="project" value="InterPro"/>
</dbReference>
<dbReference type="GO" id="GO:0006412">
    <property type="term" value="P:translation"/>
    <property type="evidence" value="ECO:0007669"/>
    <property type="project" value="UniProtKB-UniRule"/>
</dbReference>
<dbReference type="CDD" id="cd00336">
    <property type="entry name" value="Ribosomal_L22"/>
    <property type="match status" value="1"/>
</dbReference>
<dbReference type="FunFam" id="3.90.470.10:FF:000001">
    <property type="entry name" value="50S ribosomal protein L22"/>
    <property type="match status" value="1"/>
</dbReference>
<dbReference type="Gene3D" id="3.90.470.10">
    <property type="entry name" value="Ribosomal protein L22/L17"/>
    <property type="match status" value="1"/>
</dbReference>
<dbReference type="HAMAP" id="MF_01331_B">
    <property type="entry name" value="Ribosomal_uL22_B"/>
    <property type="match status" value="1"/>
</dbReference>
<dbReference type="InterPro" id="IPR001063">
    <property type="entry name" value="Ribosomal_uL22"/>
</dbReference>
<dbReference type="InterPro" id="IPR005727">
    <property type="entry name" value="Ribosomal_uL22_bac/chlpt-type"/>
</dbReference>
<dbReference type="InterPro" id="IPR047867">
    <property type="entry name" value="Ribosomal_uL22_bac/org-type"/>
</dbReference>
<dbReference type="InterPro" id="IPR018260">
    <property type="entry name" value="Ribosomal_uL22_CS"/>
</dbReference>
<dbReference type="InterPro" id="IPR036394">
    <property type="entry name" value="Ribosomal_uL22_sf"/>
</dbReference>
<dbReference type="NCBIfam" id="TIGR01044">
    <property type="entry name" value="rplV_bact"/>
    <property type="match status" value="1"/>
</dbReference>
<dbReference type="PANTHER" id="PTHR13501">
    <property type="entry name" value="CHLOROPLAST 50S RIBOSOMAL PROTEIN L22-RELATED"/>
    <property type="match status" value="1"/>
</dbReference>
<dbReference type="PANTHER" id="PTHR13501:SF8">
    <property type="entry name" value="LARGE RIBOSOMAL SUBUNIT PROTEIN UL22M"/>
    <property type="match status" value="1"/>
</dbReference>
<dbReference type="Pfam" id="PF00237">
    <property type="entry name" value="Ribosomal_L22"/>
    <property type="match status" value="1"/>
</dbReference>
<dbReference type="SUPFAM" id="SSF54843">
    <property type="entry name" value="Ribosomal protein L22"/>
    <property type="match status" value="1"/>
</dbReference>
<dbReference type="PROSITE" id="PS00464">
    <property type="entry name" value="RIBOSOMAL_L22"/>
    <property type="match status" value="1"/>
</dbReference>
<gene>
    <name evidence="1" type="primary">rplV</name>
    <name type="ordered locus">SAUSA300_2199</name>
</gene>
<feature type="chain" id="PRO_0000243210" description="Large ribosomal subunit protein uL22">
    <location>
        <begin position="1"/>
        <end position="117"/>
    </location>
</feature>
<protein>
    <recommendedName>
        <fullName evidence="1">Large ribosomal subunit protein uL22</fullName>
    </recommendedName>
    <alternativeName>
        <fullName evidence="2">50S ribosomal protein L22</fullName>
    </alternativeName>
</protein>
<organism>
    <name type="scientific">Staphylococcus aureus (strain USA300)</name>
    <dbReference type="NCBI Taxonomy" id="367830"/>
    <lineage>
        <taxon>Bacteria</taxon>
        <taxon>Bacillati</taxon>
        <taxon>Bacillota</taxon>
        <taxon>Bacilli</taxon>
        <taxon>Bacillales</taxon>
        <taxon>Staphylococcaceae</taxon>
        <taxon>Staphylococcus</taxon>
    </lineage>
</organism>
<name>RL22_STAA3</name>
<comment type="function">
    <text evidence="1">This protein binds specifically to 23S rRNA; its binding is stimulated by other ribosomal proteins, e.g. L4, L17, and L20. It is important during the early stages of 50S assembly. It makes multiple contacts with different domains of the 23S rRNA in the assembled 50S subunit and ribosome (By similarity).</text>
</comment>
<comment type="function">
    <text evidence="1">The globular domain of the protein is located near the polypeptide exit tunnel on the outside of the subunit, while an extended beta-hairpin is found that lines the wall of the exit tunnel in the center of the 70S ribosome.</text>
</comment>
<comment type="subunit">
    <text evidence="1">Part of the 50S ribosomal subunit.</text>
</comment>
<comment type="similarity">
    <text evidence="1">Belongs to the universal ribosomal protein uL22 family.</text>
</comment>
<reference key="1">
    <citation type="journal article" date="2006" name="Lancet">
        <title>Complete genome sequence of USA300, an epidemic clone of community-acquired meticillin-resistant Staphylococcus aureus.</title>
        <authorList>
            <person name="Diep B.A."/>
            <person name="Gill S.R."/>
            <person name="Chang R.F."/>
            <person name="Phan T.H."/>
            <person name="Chen J.H."/>
            <person name="Davidson M.G."/>
            <person name="Lin F."/>
            <person name="Lin J."/>
            <person name="Carleton H.A."/>
            <person name="Mongodin E.F."/>
            <person name="Sensabaugh G.F."/>
            <person name="Perdreau-Remington F."/>
        </authorList>
    </citation>
    <scope>NUCLEOTIDE SEQUENCE [LARGE SCALE GENOMIC DNA]</scope>
    <source>
        <strain>USA300</strain>
    </source>
</reference>
<proteinExistence type="inferred from homology"/>
<keyword id="KW-0687">Ribonucleoprotein</keyword>
<keyword id="KW-0689">Ribosomal protein</keyword>
<keyword id="KW-0694">RNA-binding</keyword>
<keyword id="KW-0699">rRNA-binding</keyword>
<sequence>MEAKAVARTIRIAPRKVRLVLDLIRGKNAAEAIAILKLTNKASSPVIEKVLMSALANAEHNYDMNTDELVVKEAYANEGPTLKRFRPRAQGRASAINKRTSHITIVVSDGKEEAKEA</sequence>
<evidence type="ECO:0000255" key="1">
    <source>
        <dbReference type="HAMAP-Rule" id="MF_01331"/>
    </source>
</evidence>
<evidence type="ECO:0000305" key="2"/>
<accession>Q2FEP4</accession>